<feature type="chain" id="PRO_1000115491" description="Trigger factor">
    <location>
        <begin position="1"/>
        <end position="444"/>
    </location>
</feature>
<feature type="domain" description="PPIase FKBP-type" evidence="1">
    <location>
        <begin position="160"/>
        <end position="245"/>
    </location>
</feature>
<name>TIG_ACIBC</name>
<protein>
    <recommendedName>
        <fullName evidence="1">Trigger factor</fullName>
        <shortName evidence="1">TF</shortName>
        <ecNumber evidence="1">5.2.1.8</ecNumber>
    </recommendedName>
    <alternativeName>
        <fullName evidence="1">PPIase</fullName>
    </alternativeName>
</protein>
<sequence length="444" mass="49666">MQVTTEAVSGVARRLNVSVPTSRINEQFEARLKRTAKTVKINGFRPGKVPANVVRREYGASIYQEVVNDIIRDSVFEAIQQEKINAVGMPNIEKVEHKEDALVFEATVEVYPEVEVKAFDGLEVERKTAEIKDADVDTMIENLQKQRQTWAVTKGMAKKDMQVTFDFEGSIDGEKFEGGSAEDFKLVLGSGRMIPGFEDGIIGMKAGEEKVIDVTFPEDYQAENLAGKAAQFKITVKQVEKPKLPEIDAEFLKIFGVSEEEGIEKLKADVRKNMEREVRNGLRNQVKQAAFDALVAANEIEVPAAMVAQEIDRQRQQMVQQFTQQFGGAGAQSFDKSMLPDELFKEQAERSVKLGVLVSKVLADAKLEVDQARVDAYIDDMASSYEDPTEVIEYFKNDAQQRAQIEAVVLEDQVVDHILASAKVTDKAVSYEDLLKEQQARRMG</sequence>
<proteinExistence type="inferred from homology"/>
<organism>
    <name type="scientific">Acinetobacter baumannii (strain ACICU)</name>
    <dbReference type="NCBI Taxonomy" id="405416"/>
    <lineage>
        <taxon>Bacteria</taxon>
        <taxon>Pseudomonadati</taxon>
        <taxon>Pseudomonadota</taxon>
        <taxon>Gammaproteobacteria</taxon>
        <taxon>Moraxellales</taxon>
        <taxon>Moraxellaceae</taxon>
        <taxon>Acinetobacter</taxon>
        <taxon>Acinetobacter calcoaceticus/baumannii complex</taxon>
    </lineage>
</organism>
<dbReference type="EC" id="5.2.1.8" evidence="1"/>
<dbReference type="EMBL" id="CP000863">
    <property type="protein sequence ID" value="ACC55798.1"/>
    <property type="molecule type" value="Genomic_DNA"/>
</dbReference>
<dbReference type="RefSeq" id="WP_001198432.1">
    <property type="nucleotide sequence ID" value="NZ_CP031380.1"/>
</dbReference>
<dbReference type="SMR" id="B2I3C0"/>
<dbReference type="GeneID" id="92892480"/>
<dbReference type="KEGG" id="abc:ACICU_00486"/>
<dbReference type="HOGENOM" id="CLU_033058_2_0_6"/>
<dbReference type="Proteomes" id="UP000008839">
    <property type="component" value="Chromosome"/>
</dbReference>
<dbReference type="GO" id="GO:0005737">
    <property type="term" value="C:cytoplasm"/>
    <property type="evidence" value="ECO:0007669"/>
    <property type="project" value="UniProtKB-SubCell"/>
</dbReference>
<dbReference type="GO" id="GO:0003755">
    <property type="term" value="F:peptidyl-prolyl cis-trans isomerase activity"/>
    <property type="evidence" value="ECO:0007669"/>
    <property type="project" value="UniProtKB-UniRule"/>
</dbReference>
<dbReference type="GO" id="GO:0044183">
    <property type="term" value="F:protein folding chaperone"/>
    <property type="evidence" value="ECO:0007669"/>
    <property type="project" value="TreeGrafter"/>
</dbReference>
<dbReference type="GO" id="GO:0043022">
    <property type="term" value="F:ribosome binding"/>
    <property type="evidence" value="ECO:0007669"/>
    <property type="project" value="TreeGrafter"/>
</dbReference>
<dbReference type="GO" id="GO:0051083">
    <property type="term" value="P:'de novo' cotranslational protein folding"/>
    <property type="evidence" value="ECO:0007669"/>
    <property type="project" value="TreeGrafter"/>
</dbReference>
<dbReference type="GO" id="GO:0051301">
    <property type="term" value="P:cell division"/>
    <property type="evidence" value="ECO:0007669"/>
    <property type="project" value="UniProtKB-KW"/>
</dbReference>
<dbReference type="GO" id="GO:0061077">
    <property type="term" value="P:chaperone-mediated protein folding"/>
    <property type="evidence" value="ECO:0007669"/>
    <property type="project" value="TreeGrafter"/>
</dbReference>
<dbReference type="GO" id="GO:0015031">
    <property type="term" value="P:protein transport"/>
    <property type="evidence" value="ECO:0007669"/>
    <property type="project" value="UniProtKB-UniRule"/>
</dbReference>
<dbReference type="GO" id="GO:0043335">
    <property type="term" value="P:protein unfolding"/>
    <property type="evidence" value="ECO:0007669"/>
    <property type="project" value="TreeGrafter"/>
</dbReference>
<dbReference type="FunFam" id="3.10.50.40:FF:000001">
    <property type="entry name" value="Trigger factor"/>
    <property type="match status" value="1"/>
</dbReference>
<dbReference type="Gene3D" id="3.10.50.40">
    <property type="match status" value="1"/>
</dbReference>
<dbReference type="Gene3D" id="3.30.70.1050">
    <property type="entry name" value="Trigger factor ribosome-binding domain"/>
    <property type="match status" value="1"/>
</dbReference>
<dbReference type="Gene3D" id="1.10.3120.10">
    <property type="entry name" value="Trigger factor, C-terminal domain"/>
    <property type="match status" value="1"/>
</dbReference>
<dbReference type="HAMAP" id="MF_00303">
    <property type="entry name" value="Trigger_factor_Tig"/>
    <property type="match status" value="1"/>
</dbReference>
<dbReference type="InterPro" id="IPR046357">
    <property type="entry name" value="PPIase_dom_sf"/>
</dbReference>
<dbReference type="InterPro" id="IPR001179">
    <property type="entry name" value="PPIase_FKBP_dom"/>
</dbReference>
<dbReference type="InterPro" id="IPR005215">
    <property type="entry name" value="Trig_fac"/>
</dbReference>
<dbReference type="InterPro" id="IPR008880">
    <property type="entry name" value="Trigger_fac_C"/>
</dbReference>
<dbReference type="InterPro" id="IPR037041">
    <property type="entry name" value="Trigger_fac_C_sf"/>
</dbReference>
<dbReference type="InterPro" id="IPR008881">
    <property type="entry name" value="Trigger_fac_ribosome-bd_bac"/>
</dbReference>
<dbReference type="InterPro" id="IPR036611">
    <property type="entry name" value="Trigger_fac_ribosome-bd_sf"/>
</dbReference>
<dbReference type="InterPro" id="IPR027304">
    <property type="entry name" value="Trigger_fact/SurA_dom_sf"/>
</dbReference>
<dbReference type="NCBIfam" id="TIGR00115">
    <property type="entry name" value="tig"/>
    <property type="match status" value="1"/>
</dbReference>
<dbReference type="PANTHER" id="PTHR30560">
    <property type="entry name" value="TRIGGER FACTOR CHAPERONE AND PEPTIDYL-PROLYL CIS/TRANS ISOMERASE"/>
    <property type="match status" value="1"/>
</dbReference>
<dbReference type="PANTHER" id="PTHR30560:SF3">
    <property type="entry name" value="TRIGGER FACTOR-LIKE PROTEIN TIG, CHLOROPLASTIC"/>
    <property type="match status" value="1"/>
</dbReference>
<dbReference type="Pfam" id="PF00254">
    <property type="entry name" value="FKBP_C"/>
    <property type="match status" value="1"/>
</dbReference>
<dbReference type="Pfam" id="PF05698">
    <property type="entry name" value="Trigger_C"/>
    <property type="match status" value="1"/>
</dbReference>
<dbReference type="Pfam" id="PF05697">
    <property type="entry name" value="Trigger_N"/>
    <property type="match status" value="1"/>
</dbReference>
<dbReference type="PIRSF" id="PIRSF003095">
    <property type="entry name" value="Trigger_factor"/>
    <property type="match status" value="1"/>
</dbReference>
<dbReference type="SUPFAM" id="SSF54534">
    <property type="entry name" value="FKBP-like"/>
    <property type="match status" value="1"/>
</dbReference>
<dbReference type="SUPFAM" id="SSF109998">
    <property type="entry name" value="Triger factor/SurA peptide-binding domain-like"/>
    <property type="match status" value="1"/>
</dbReference>
<dbReference type="SUPFAM" id="SSF102735">
    <property type="entry name" value="Trigger factor ribosome-binding domain"/>
    <property type="match status" value="1"/>
</dbReference>
<dbReference type="PROSITE" id="PS50059">
    <property type="entry name" value="FKBP_PPIASE"/>
    <property type="match status" value="1"/>
</dbReference>
<gene>
    <name evidence="1" type="primary">tig</name>
    <name type="ordered locus">ACICU_00486</name>
</gene>
<reference key="1">
    <citation type="journal article" date="2008" name="Antimicrob. Agents Chemother.">
        <title>Whole-genome pyrosequencing of an epidemic multidrug-resistant Acinetobacter baumannii strain belonging to the European clone II group.</title>
        <authorList>
            <person name="Iacono M."/>
            <person name="Villa L."/>
            <person name="Fortini D."/>
            <person name="Bordoni R."/>
            <person name="Imperi F."/>
            <person name="Bonnal R.J."/>
            <person name="Sicheritz-Ponten T."/>
            <person name="De Bellis G."/>
            <person name="Visca P."/>
            <person name="Cassone A."/>
            <person name="Carattoli A."/>
        </authorList>
    </citation>
    <scope>NUCLEOTIDE SEQUENCE [LARGE SCALE GENOMIC DNA]</scope>
    <source>
        <strain>ACICU</strain>
    </source>
</reference>
<evidence type="ECO:0000255" key="1">
    <source>
        <dbReference type="HAMAP-Rule" id="MF_00303"/>
    </source>
</evidence>
<comment type="function">
    <text evidence="1">Involved in protein export. Acts as a chaperone by maintaining the newly synthesized protein in an open conformation. Functions as a peptidyl-prolyl cis-trans isomerase.</text>
</comment>
<comment type="catalytic activity">
    <reaction evidence="1">
        <text>[protein]-peptidylproline (omega=180) = [protein]-peptidylproline (omega=0)</text>
        <dbReference type="Rhea" id="RHEA:16237"/>
        <dbReference type="Rhea" id="RHEA-COMP:10747"/>
        <dbReference type="Rhea" id="RHEA-COMP:10748"/>
        <dbReference type="ChEBI" id="CHEBI:83833"/>
        <dbReference type="ChEBI" id="CHEBI:83834"/>
        <dbReference type="EC" id="5.2.1.8"/>
    </reaction>
</comment>
<comment type="subcellular location">
    <subcellularLocation>
        <location>Cytoplasm</location>
    </subcellularLocation>
    <text evidence="1">About half TF is bound to the ribosome near the polypeptide exit tunnel while the other half is free in the cytoplasm.</text>
</comment>
<comment type="domain">
    <text evidence="1">Consists of 3 domains; the N-terminus binds the ribosome, the middle domain has PPIase activity, while the C-terminus has intrinsic chaperone activity on its own.</text>
</comment>
<comment type="similarity">
    <text evidence="1">Belongs to the FKBP-type PPIase family. Tig subfamily.</text>
</comment>
<keyword id="KW-0131">Cell cycle</keyword>
<keyword id="KW-0132">Cell division</keyword>
<keyword id="KW-0143">Chaperone</keyword>
<keyword id="KW-0963">Cytoplasm</keyword>
<keyword id="KW-0413">Isomerase</keyword>
<keyword id="KW-0697">Rotamase</keyword>
<accession>B2I3C0</accession>